<name>RPO1N_METVS</name>
<proteinExistence type="inferred from homology"/>
<gene>
    <name evidence="1" type="primary">rpo1N</name>
    <name type="synonym">rpoA</name>
    <name evidence="1" type="synonym">rpoA1</name>
    <name type="ordered locus">Mevan_0673</name>
</gene>
<evidence type="ECO:0000255" key="1">
    <source>
        <dbReference type="HAMAP-Rule" id="MF_00863"/>
    </source>
</evidence>
<organism>
    <name type="scientific">Methanococcus vannielii (strain ATCC 35089 / DSM 1224 / JCM 13029 / OCM 148 / SB)</name>
    <dbReference type="NCBI Taxonomy" id="406327"/>
    <lineage>
        <taxon>Archaea</taxon>
        <taxon>Methanobacteriati</taxon>
        <taxon>Methanobacteriota</taxon>
        <taxon>Methanomada group</taxon>
        <taxon>Methanococci</taxon>
        <taxon>Methanococcales</taxon>
        <taxon>Methanococcaceae</taxon>
        <taxon>Methanococcus</taxon>
    </lineage>
</organism>
<comment type="function">
    <text evidence="1">DNA-dependent RNA polymerase (RNAP) catalyzes the transcription of DNA into RNA using the four ribonucleoside triphosphates as substrates. Forms the clamp head domain.</text>
</comment>
<comment type="catalytic activity">
    <reaction evidence="1">
        <text>RNA(n) + a ribonucleoside 5'-triphosphate = RNA(n+1) + diphosphate</text>
        <dbReference type="Rhea" id="RHEA:21248"/>
        <dbReference type="Rhea" id="RHEA-COMP:14527"/>
        <dbReference type="Rhea" id="RHEA-COMP:17342"/>
        <dbReference type="ChEBI" id="CHEBI:33019"/>
        <dbReference type="ChEBI" id="CHEBI:61557"/>
        <dbReference type="ChEBI" id="CHEBI:140395"/>
        <dbReference type="EC" id="2.7.7.6"/>
    </reaction>
</comment>
<comment type="cofactor">
    <cofactor evidence="1">
        <name>Mg(2+)</name>
        <dbReference type="ChEBI" id="CHEBI:18420"/>
    </cofactor>
</comment>
<comment type="cofactor">
    <cofactor evidence="1">
        <name>Zn(2+)</name>
        <dbReference type="ChEBI" id="CHEBI:29105"/>
    </cofactor>
    <text evidence="1">Binds at least 2 Zn(2+) per subunit.</text>
</comment>
<comment type="subunit">
    <text evidence="1">Part of the RNA polymerase complex.</text>
</comment>
<comment type="subcellular location">
    <subcellularLocation>
        <location evidence="1">Cytoplasm</location>
    </subcellularLocation>
</comment>
<comment type="similarity">
    <text evidence="1">Belongs to the RNA polymerase beta' chain family.</text>
</comment>
<accession>P41556</accession>
<accession>A6UQ07</accession>
<protein>
    <recommendedName>
        <fullName evidence="1">DNA-directed RNA polymerase subunit Rpo1N</fullName>
        <ecNumber evidence="1">2.7.7.6</ecNumber>
    </recommendedName>
    <alternativeName>
        <fullName evidence="1">DNA-directed RNA polymerase subunit A'</fullName>
    </alternativeName>
</protein>
<keyword id="KW-0963">Cytoplasm</keyword>
<keyword id="KW-0238">DNA-binding</keyword>
<keyword id="KW-0240">DNA-directed RNA polymerase</keyword>
<keyword id="KW-0460">Magnesium</keyword>
<keyword id="KW-0479">Metal-binding</keyword>
<keyword id="KW-0548">Nucleotidyltransferase</keyword>
<keyword id="KW-0804">Transcription</keyword>
<keyword id="KW-0808">Transferase</keyword>
<keyword id="KW-0862">Zinc</keyword>
<sequence length="889" mass="99098">MDRFDVPKEIGDITFGLLSPEQIRTMSVAKIVTADTYDDDGYPIDGGLMDTRLGVIDPGLVCKSCSGRVGTCPGHFGHIELSKSVIHIGFAKDIYKLLKAVCPHCGKVTVTEIKRDEYLEKMLKLEEDGGDPWTLSDDLLKEAAKSSVCPSCGEVKYDIKYDKPTTYHQLDGKSQKQLTSSEVREILEKIPNEDCKLLGINSRVARPEYMVLTVLPVPPVTVRPSITLESGERSEDDLTHKLVDIIRINQRLEENINGGAPNLIIEDLWDLLQYHINTYFDNEAPGIPPARHRSGRPLRTLAQRLKGKEGRFRHNLAGKRVNFSARTVISPDPRLSINEVGIPELIAKELTVPEKVTPYNIERIRKLIENGSDKHPGVNYVIKKVKTKDGKEEEYKIKITDTNKKMWVENIVDGMVVERHLGDGDVVLYNRQPSLHRMSIMAHKVKVLPYRTFRHNLCVCPPYNADFDGDEMNVHVPQSEEARAEAETLMLVEKHIISPRYGGPIIGAIHDFVSGAYVLTSSNFIKDEALTLLKSSGFGSELGEPDFVENGIEYYSGKSLFSKTLPKGLNLQYKAKVCKKCVQCKREECENDAFVIIRNGRLVQGVIDKNGFGAETGVVLNTIVKDFGSEDARTFLDSATKMSVKSMMLRGFTTGIDDEDIPSEAIQEIQDLLDKAESDVQEIVERYEGGTLDPLPGRGIEESREAYIMQILGKARDDTGKVAEKYLSKENHAALMARTGARGSLLNITMMAASVGQQSVRGGRVFRGYRGRTLPHFGEGSLDAKSHGFVRSCYKKGLAPTEYFFHAMGGREGLVDQAVRTAQSGYMQRRLVNALQDIKAEYDGTVRDSRGIIVQFNYGEDLVDPSKADHGKGVDLDKVFTKVISKYEN</sequence>
<feature type="chain" id="PRO_0000074006" description="DNA-directed RNA polymerase subunit Rpo1N">
    <location>
        <begin position="1"/>
        <end position="889"/>
    </location>
</feature>
<feature type="binding site" evidence="1">
    <location>
        <position position="62"/>
    </location>
    <ligand>
        <name>Zn(2+)</name>
        <dbReference type="ChEBI" id="CHEBI:29105"/>
        <label>1</label>
    </ligand>
</feature>
<feature type="binding site" evidence="1">
    <location>
        <position position="65"/>
    </location>
    <ligand>
        <name>Zn(2+)</name>
        <dbReference type="ChEBI" id="CHEBI:29105"/>
        <label>1</label>
    </ligand>
</feature>
<feature type="binding site" evidence="1">
    <location>
        <position position="72"/>
    </location>
    <ligand>
        <name>Zn(2+)</name>
        <dbReference type="ChEBI" id="CHEBI:29105"/>
        <label>1</label>
    </ligand>
</feature>
<feature type="binding site" evidence="1">
    <location>
        <position position="75"/>
    </location>
    <ligand>
        <name>Zn(2+)</name>
        <dbReference type="ChEBI" id="CHEBI:29105"/>
        <label>1</label>
    </ligand>
</feature>
<feature type="binding site" evidence="1">
    <location>
        <position position="102"/>
    </location>
    <ligand>
        <name>Zn(2+)</name>
        <dbReference type="ChEBI" id="CHEBI:29105"/>
        <label>2</label>
    </ligand>
</feature>
<feature type="binding site" evidence="1">
    <location>
        <position position="105"/>
    </location>
    <ligand>
        <name>Zn(2+)</name>
        <dbReference type="ChEBI" id="CHEBI:29105"/>
        <label>2</label>
    </ligand>
</feature>
<feature type="binding site" evidence="1">
    <location>
        <position position="149"/>
    </location>
    <ligand>
        <name>Zn(2+)</name>
        <dbReference type="ChEBI" id="CHEBI:29105"/>
        <label>2</label>
    </ligand>
</feature>
<feature type="binding site" evidence="1">
    <location>
        <position position="152"/>
    </location>
    <ligand>
        <name>Zn(2+)</name>
        <dbReference type="ChEBI" id="CHEBI:29105"/>
        <label>2</label>
    </ligand>
</feature>
<feature type="binding site" evidence="1">
    <location>
        <position position="466"/>
    </location>
    <ligand>
        <name>Mg(2+)</name>
        <dbReference type="ChEBI" id="CHEBI:18420"/>
    </ligand>
</feature>
<feature type="binding site" evidence="1">
    <location>
        <position position="468"/>
    </location>
    <ligand>
        <name>Mg(2+)</name>
        <dbReference type="ChEBI" id="CHEBI:18420"/>
    </ligand>
</feature>
<feature type="binding site" evidence="1">
    <location>
        <position position="470"/>
    </location>
    <ligand>
        <name>Mg(2+)</name>
        <dbReference type="ChEBI" id="CHEBI:18420"/>
    </ligand>
</feature>
<dbReference type="EC" id="2.7.7.6" evidence="1"/>
<dbReference type="EMBL" id="X73293">
    <property type="protein sequence ID" value="CAA51728.1"/>
    <property type="molecule type" value="Genomic_DNA"/>
</dbReference>
<dbReference type="EMBL" id="CP000742">
    <property type="protein sequence ID" value="ABR54579.1"/>
    <property type="molecule type" value="Genomic_DNA"/>
</dbReference>
<dbReference type="PIR" id="S47162">
    <property type="entry name" value="S47162"/>
</dbReference>
<dbReference type="RefSeq" id="WP_011972481.1">
    <property type="nucleotide sequence ID" value="NC_009634.1"/>
</dbReference>
<dbReference type="SMR" id="P41556"/>
<dbReference type="STRING" id="406327.Mevan_0673"/>
<dbReference type="GeneID" id="5325060"/>
<dbReference type="KEGG" id="mvn:Mevan_0673"/>
<dbReference type="eggNOG" id="arCOG04257">
    <property type="taxonomic scope" value="Archaea"/>
</dbReference>
<dbReference type="HOGENOM" id="CLU_000487_3_1_2"/>
<dbReference type="OrthoDB" id="371812at2157"/>
<dbReference type="Proteomes" id="UP000001107">
    <property type="component" value="Chromosome"/>
</dbReference>
<dbReference type="GO" id="GO:0005737">
    <property type="term" value="C:cytoplasm"/>
    <property type="evidence" value="ECO:0007669"/>
    <property type="project" value="UniProtKB-SubCell"/>
</dbReference>
<dbReference type="GO" id="GO:0000428">
    <property type="term" value="C:DNA-directed RNA polymerase complex"/>
    <property type="evidence" value="ECO:0007669"/>
    <property type="project" value="UniProtKB-KW"/>
</dbReference>
<dbReference type="GO" id="GO:0003677">
    <property type="term" value="F:DNA binding"/>
    <property type="evidence" value="ECO:0007669"/>
    <property type="project" value="UniProtKB-UniRule"/>
</dbReference>
<dbReference type="GO" id="GO:0003899">
    <property type="term" value="F:DNA-directed RNA polymerase activity"/>
    <property type="evidence" value="ECO:0007669"/>
    <property type="project" value="UniProtKB-UniRule"/>
</dbReference>
<dbReference type="GO" id="GO:0000287">
    <property type="term" value="F:magnesium ion binding"/>
    <property type="evidence" value="ECO:0007669"/>
    <property type="project" value="UniProtKB-UniRule"/>
</dbReference>
<dbReference type="GO" id="GO:0008270">
    <property type="term" value="F:zinc ion binding"/>
    <property type="evidence" value="ECO:0007669"/>
    <property type="project" value="UniProtKB-UniRule"/>
</dbReference>
<dbReference type="GO" id="GO:0006351">
    <property type="term" value="P:DNA-templated transcription"/>
    <property type="evidence" value="ECO:0007669"/>
    <property type="project" value="UniProtKB-UniRule"/>
</dbReference>
<dbReference type="CDD" id="cd02582">
    <property type="entry name" value="RNAP_archeal_A"/>
    <property type="match status" value="1"/>
</dbReference>
<dbReference type="FunFam" id="2.40.40.20:FF:000019">
    <property type="entry name" value="DNA-directed RNA polymerase II subunit RPB1"/>
    <property type="match status" value="1"/>
</dbReference>
<dbReference type="Gene3D" id="1.10.10.1950">
    <property type="match status" value="2"/>
</dbReference>
<dbReference type="Gene3D" id="1.10.132.30">
    <property type="match status" value="1"/>
</dbReference>
<dbReference type="Gene3D" id="2.40.40.20">
    <property type="match status" value="1"/>
</dbReference>
<dbReference type="Gene3D" id="2.60.40.2940">
    <property type="match status" value="1"/>
</dbReference>
<dbReference type="Gene3D" id="6.10.250.2940">
    <property type="match status" value="1"/>
</dbReference>
<dbReference type="Gene3D" id="6.20.50.80">
    <property type="match status" value="1"/>
</dbReference>
<dbReference type="Gene3D" id="3.30.1490.180">
    <property type="entry name" value="RNA polymerase ii"/>
    <property type="match status" value="1"/>
</dbReference>
<dbReference type="Gene3D" id="4.10.860.120">
    <property type="entry name" value="RNA polymerase II, clamp domain"/>
    <property type="match status" value="2"/>
</dbReference>
<dbReference type="HAMAP" id="MF_00863">
    <property type="entry name" value="RNApol_arch_Rpo1N"/>
    <property type="match status" value="1"/>
</dbReference>
<dbReference type="InterPro" id="IPR045867">
    <property type="entry name" value="DNA-dir_RpoC_beta_prime"/>
</dbReference>
<dbReference type="InterPro" id="IPR000722">
    <property type="entry name" value="RNA_pol_asu"/>
</dbReference>
<dbReference type="InterPro" id="IPR006592">
    <property type="entry name" value="RNA_pol_N"/>
</dbReference>
<dbReference type="InterPro" id="IPR007080">
    <property type="entry name" value="RNA_pol_Rpb1_1"/>
</dbReference>
<dbReference type="InterPro" id="IPR007066">
    <property type="entry name" value="RNA_pol_Rpb1_3"/>
</dbReference>
<dbReference type="InterPro" id="IPR007083">
    <property type="entry name" value="RNA_pol_Rpb1_4"/>
</dbReference>
<dbReference type="InterPro" id="IPR007081">
    <property type="entry name" value="RNA_pol_Rpb1_5"/>
</dbReference>
<dbReference type="InterPro" id="IPR044893">
    <property type="entry name" value="RNA_pol_Rpb1_clamp_domain"/>
</dbReference>
<dbReference type="InterPro" id="IPR038120">
    <property type="entry name" value="Rpb1_funnel_sf"/>
</dbReference>
<dbReference type="InterPro" id="IPR012758">
    <property type="entry name" value="RPO1N"/>
</dbReference>
<dbReference type="NCBIfam" id="NF006336">
    <property type="entry name" value="PRK08566.1"/>
    <property type="match status" value="1"/>
</dbReference>
<dbReference type="NCBIfam" id="TIGR02390">
    <property type="entry name" value="RNA_pol_rpoA1"/>
    <property type="match status" value="1"/>
</dbReference>
<dbReference type="PANTHER" id="PTHR19376">
    <property type="entry name" value="DNA-DIRECTED RNA POLYMERASE"/>
    <property type="match status" value="1"/>
</dbReference>
<dbReference type="PANTHER" id="PTHR19376:SF32">
    <property type="entry name" value="DNA-DIRECTED RNA POLYMERASE III SUBUNIT RPC1"/>
    <property type="match status" value="1"/>
</dbReference>
<dbReference type="Pfam" id="PF04997">
    <property type="entry name" value="RNA_pol_Rpb1_1"/>
    <property type="match status" value="1"/>
</dbReference>
<dbReference type="Pfam" id="PF00623">
    <property type="entry name" value="RNA_pol_Rpb1_2"/>
    <property type="match status" value="1"/>
</dbReference>
<dbReference type="Pfam" id="PF04983">
    <property type="entry name" value="RNA_pol_Rpb1_3"/>
    <property type="match status" value="1"/>
</dbReference>
<dbReference type="Pfam" id="PF05000">
    <property type="entry name" value="RNA_pol_Rpb1_4"/>
    <property type="match status" value="1"/>
</dbReference>
<dbReference type="Pfam" id="PF04998">
    <property type="entry name" value="RNA_pol_Rpb1_5"/>
    <property type="match status" value="1"/>
</dbReference>
<dbReference type="SMART" id="SM00663">
    <property type="entry name" value="RPOLA_N"/>
    <property type="match status" value="1"/>
</dbReference>
<dbReference type="SUPFAM" id="SSF64484">
    <property type="entry name" value="beta and beta-prime subunits of DNA dependent RNA-polymerase"/>
    <property type="match status" value="1"/>
</dbReference>
<reference key="1">
    <citation type="submission" date="1993-06" db="EMBL/GenBank/DDBJ databases">
        <title>DNA sequence of the genes of the large subunits of the DNA dependent RNA-polymerase of Methanococcus vannielii.</title>
        <authorList>
            <person name="Palm P."/>
            <person name="Arnold-Ammer I."/>
            <person name="Lechner K.A."/>
            <person name="Zillig W."/>
        </authorList>
    </citation>
    <scope>NUCLEOTIDE SEQUENCE [GENOMIC DNA]</scope>
</reference>
<reference key="2">
    <citation type="submission" date="2007-06" db="EMBL/GenBank/DDBJ databases">
        <title>Complete sequence of Methanococcus vannielii SB.</title>
        <authorList>
            <consortium name="US DOE Joint Genome Institute"/>
            <person name="Copeland A."/>
            <person name="Lucas S."/>
            <person name="Lapidus A."/>
            <person name="Barry K."/>
            <person name="Glavina del Rio T."/>
            <person name="Dalin E."/>
            <person name="Tice H."/>
            <person name="Pitluck S."/>
            <person name="Chain P."/>
            <person name="Malfatti S."/>
            <person name="Shin M."/>
            <person name="Vergez L."/>
            <person name="Schmutz J."/>
            <person name="Larimer F."/>
            <person name="Land M."/>
            <person name="Hauser L."/>
            <person name="Kyrpides N."/>
            <person name="Anderson I."/>
            <person name="Sieprawska-Lupa M."/>
            <person name="Whitman W.B."/>
            <person name="Richardson P."/>
        </authorList>
    </citation>
    <scope>NUCLEOTIDE SEQUENCE [LARGE SCALE GENOMIC DNA]</scope>
    <source>
        <strain>ATCC 35089 / DSM 1224 / JCM 13029 / OCM 148 / SB</strain>
    </source>
</reference>